<accession>Q86TI2</accession>
<accession>O75273</accession>
<accession>O75868</accession>
<accession>Q1ZZB8</accession>
<accession>Q6AI37</accession>
<accession>Q6UAL0</accession>
<accession>Q6ZMT2</accession>
<accession>Q6ZNJ5</accession>
<accession>Q8N2J7</accession>
<accession>Q8N3F5</accession>
<accession>Q8WXD8</accession>
<accession>Q96NT8</accession>
<accession>Q9BVR3</accession>
<sequence length="863" mass="98263">MATTGTPTADRGDAAATDDPAARFQVQKHSWDGLRSIIHGSRKYSGLIVNKAPHDFQFVQKTDESGPHSHRLYYLGMPYGSRENSLLYSEIPKKVRKEALLLLSWKQMLDHFQATPHHGVYSREEELLRERKRLGVFGITSYDFHSESGLFLFQASNSLFHCRDGGKNGFMVSPMKPLEIKTQCSGPRMDPKICPADPAFFSFINNSDLWVANIETGEERRLTFCHQGLSNVLDDPKSAGVATFVIQEEFDRFTGYWWCPTASWEGSEGLKTLRILYEEVDESEVEVIHVPSPALEERKTDSYRYPRTGSKNPKIALKLAEFQTDSQGKIVSTQEKELVQPFSSLFPKVEYIARAGWTRDGKYAWAMFLDRPQQWLQLVLLPPALFIPSTENEEQRLASARAVPRNVQPYVVYEEVTNVWINVHDIFYPFPQSEGEDELCFLRANECKTGFCHLYKVTAVLKSQGYDWSEPFSPGEDEFKCPIKEEIALTSGEWEVLARHGSKIWVNEETKLVYFQGTKDTPLEHHLYVVSYEAAGEIVRLTTPGFSHSCSMSQNFDMFVSHYSSVSTPPCVHVYKLSGPDDDPLHKQPRFWASMMEAASCPPDYVPPEIFHFHTRSDVRLYGMIYKPHALQPGKKHPTVLFVYGGPQVQLVNNSFKGIKYLRLNTLASLGYAVVVIDGRGSCQRGLRFEGALKNQMGQVEIEDQVEGLQFVAEKYGFIDLSRVAIHGWSYGGFLSLMGLIHKPQVFKVAIAGAPVTVWMAYDTGYTERYMDVPENNQHGYEAGSVALHVEKLPNEPNRLLILHGFLDENVHFFHTNFLVSQLIRAGKPYQLQIYPNERHSIRCPESGEHYEVTLLHFLQEYL</sequence>
<comment type="function">
    <text evidence="4 6 7 9 10 11 12 13 14 15 16 17 18 19">Dipeptidyl peptidase that cleaves off N-terminal dipeptides from proteins having a Pro or Ala residue at position 2 (PubMed:12662155, PubMed:16475979, PubMed:19667070, PubMed:29382749, PubMed:30291141, PubMed:33731929, PubMed:36112693). Acts as a key inhibitor of caspase-1-dependent monocyte and macrophage pyroptosis in resting cells by preventing activation of NLRP1 and CARD8 (PubMed:27820798, PubMed:29967349, PubMed:30291141, PubMed:31525884, PubMed:32796818, PubMed:36112693, PubMed:36357533). Sequesters the cleaved C-terminal part of NLRP1 and CARD8, which respectively constitute the active part of the NLRP1 and CARD8 inflammasomes, in a ternary complex, thereby preventing their oligomerization and activation (PubMed:33731929, PubMed:33731932, PubMed:34019797). The dipeptidyl peptidase activity is required to suppress NLRP1 and CARD8; however, neither NLRP1 nor CARD8 are bona fide substrates of DPP9, suggesting the existence of substrate(s) required for NLRP1 and CARD8 inhibition (PubMed:33731929).</text>
</comment>
<comment type="catalytic activity">
    <reaction evidence="4 5 6 7 10 12 15">
        <text>Release of an N-terminal dipeptide, Xaa-Yaa-|-Zaa-, from a polypeptide, preferentially when Yaa is Pro, provided Zaa is neither Pro nor hydroxyproline.</text>
        <dbReference type="EC" id="3.4.14.5"/>
    </reaction>
</comment>
<comment type="activity regulation">
    <text evidence="4 9 11 14 16 17 19">Inhibited by the serine proteinase inhibitor 4-(2-aminoethyl)benzenesulphonyl fluoride (AEBSF), and by di-isopropylfluorophosphate (PubMed:12662155). Inhibited by Val-boroPro (Talabostat, PT-100), a non-selective inhibitor, which triggers pyroptosis in monocytes and macrophages (PubMed:27820798, PubMed:29967349, PubMed:32796818, PubMed:33731932, PubMed:36357533). Val-boroPro inhibits activity by binding to the active site, mimicking a substrate-bound state, thereby displacing the C-terminal fragment of NLRP1, leading to activation of the NLRP1 inflammasome (PubMed:33731932, PubMed:34019797, PubMed:36357533). In contrast, Val-boroPro does not directly displaces CARD8: it acts by promoting degradation of the N-terminal part of CARD8, leading to indirect disruption of the ternary complex (PubMed:34019797). Chemical inhibition of DPP9 by Val-boroPro in HIV-1-infected cells activates the CARD8 inflammasome, triggering cell death, offering a promising strategy for the elimination of HIV-1 reservoirs in people living with HIV-1 (PubMed:36357533).</text>
</comment>
<comment type="biophysicochemical properties">
    <kinetics>
        <KM evidence="4 5">161 uM for Ala-Pro-AMC</KM>
        <KM evidence="4 5">180 uM for Ala-Pro-AFC</KM>
        <KM evidence="10">222 uM for Gly-Pro-AMC</KM>
        <KM evidence="10">122 uM for Lys-Pro-AMC</KM>
        <KM evidence="10">72.6 uM for Trp-Pro-AMC</KM>
        <KM evidence="10">96 uM for Val-Pro-AMC</KM>
        <text evidence="10">kcat is 121 sec(-1) with Gly-Pro-AMC substrate (PubMed:29382749). kcat is 52.6 sec(-1) with Lys-Pro-AMC substrate (PubMed:29382749). kcat is 54 sec(-1) with Asp-Pro-AMC substrate (PubMed:29382749). kcat is 40.3 sec(-1) with Trp-Pro-AMC substrate (PubMed:29382749). kcat is 79.9 sec(-1) with Val-Pro-AMC substrate (PubMed:29382749).</text>
    </kinetics>
    <phDependence>
        <text evidence="4 5">Optimum pH is 7.5-8.5. Little activity below pH 6.5.</text>
    </phDependence>
</comment>
<comment type="subunit">
    <text evidence="6 10 15 16 17">Homodimer (PubMed:16475979, PubMed:29382749). Forms a ternary complex with NLRP1, composed of a DPP9 homodimer, one full-length NLRP1 protein, and one cleaved C-terminus of NLRP1 (NACHT, LRR and PYD domains-containing protein 1, C-terminus) (PubMed:33731929, PubMed:33731932). Forms a ternary complex with CARD8, composed of a DPP9 homodimer, one full-length NLRP1 protein, and one cleaved C-terminus of CARD8 (Caspase recruitment domain-containing protein 8, C-terminus) (PubMed:33731929, PubMed:34019797). In the ternary complex, only one subunit of the DPP9 homodimer is bound to NLRP1 or CARD8 (PubMed:33731932, PubMed:34019797).</text>
</comment>
<comment type="interaction">
    <interactant intactId="EBI-7475352">
        <id>Q86TI2</id>
    </interactant>
    <interactant intactId="EBI-10316475">
        <id>Q9NXR5</id>
        <label>ANKRD10</label>
    </interactant>
    <organismsDiffer>false</organismsDiffer>
    <experiments>2</experiments>
</comment>
<comment type="interaction">
    <interactant intactId="EBI-7475352">
        <id>Q86TI2</id>
    </interactant>
    <interactant intactId="EBI-7475352">
        <id>Q86TI2</id>
        <label>DPP9</label>
    </interactant>
    <organismsDiffer>false</organismsDiffer>
    <experiments>2</experiments>
</comment>
<comment type="interaction">
    <interactant intactId="EBI-21529239">
        <id>Q86TI2-2</id>
    </interactant>
    <interactant intactId="EBI-10232010">
        <id>Q6NUP5</id>
        <label>AGTR1</label>
    </interactant>
    <organismsDiffer>false</organismsDiffer>
    <experiments>3</experiments>
</comment>
<comment type="interaction">
    <interactant intactId="EBI-21529239">
        <id>Q86TI2-2</id>
    </interactant>
    <interactant intactId="EBI-10988864">
        <id>P46379-2</id>
        <label>BAG6</label>
    </interactant>
    <organismsDiffer>false</organismsDiffer>
    <experiments>3</experiments>
</comment>
<comment type="interaction">
    <interactant intactId="EBI-21529239">
        <id>Q86TI2-2</id>
    </interactant>
    <interactant intactId="EBI-2837444">
        <id>Q8WUW1</id>
        <label>BRK1</label>
    </interactant>
    <organismsDiffer>false</organismsDiffer>
    <experiments>3</experiments>
</comment>
<comment type="interaction">
    <interactant intactId="EBI-21529239">
        <id>Q86TI2-2</id>
    </interactant>
    <interactant intactId="EBI-21553822">
        <id>Q96A83-2</id>
        <label>COL26A1</label>
    </interactant>
    <organismsDiffer>false</organismsDiffer>
    <experiments>3</experiments>
</comment>
<comment type="interaction">
    <interactant intactId="EBI-21529239">
        <id>Q86TI2-2</id>
    </interactant>
    <interactant intactId="EBI-12593112">
        <id>O75190-2</id>
        <label>DNAJB6</label>
    </interactant>
    <organismsDiffer>false</organismsDiffer>
    <experiments>3</experiments>
</comment>
<comment type="interaction">
    <interactant intactId="EBI-21529239">
        <id>Q86TI2-2</id>
    </interactant>
    <interactant intactId="EBI-395638">
        <id>O14645</id>
        <label>DNALI1</label>
    </interactant>
    <organismsDiffer>false</organismsDiffer>
    <experiments>3</experiments>
</comment>
<comment type="interaction">
    <interactant intactId="EBI-21529239">
        <id>Q86TI2-2</id>
    </interactant>
    <interactant intactId="EBI-750300">
        <id>Q01658</id>
        <label>DR1</label>
    </interactant>
    <organismsDiffer>false</organismsDiffer>
    <experiments>3</experiments>
</comment>
<comment type="interaction">
    <interactant intactId="EBI-21529239">
        <id>Q86TI2-2</id>
    </interactant>
    <interactant intactId="EBI-5280572">
        <id>P29692-2</id>
        <label>EEF1D</label>
    </interactant>
    <organismsDiffer>false</organismsDiffer>
    <experiments>3</experiments>
</comment>
<comment type="interaction">
    <interactant intactId="EBI-21529239">
        <id>Q86TI2-2</id>
    </interactant>
    <interactant intactId="EBI-25856644">
        <id>Q06787-7</id>
        <label>FMR1</label>
    </interactant>
    <organismsDiffer>false</organismsDiffer>
    <experiments>3</experiments>
</comment>
<comment type="interaction">
    <interactant intactId="EBI-21529239">
        <id>Q86TI2-2</id>
    </interactant>
    <interactant intactId="EBI-1054873">
        <id>Q9Y5Q9</id>
        <label>GTF3C3</label>
    </interactant>
    <organismsDiffer>false</organismsDiffer>
    <experiments>3</experiments>
</comment>
<comment type="interaction">
    <interactant intactId="EBI-21529239">
        <id>Q86TI2-2</id>
    </interactant>
    <interactant intactId="EBI-948266">
        <id>O14901</id>
        <label>KLF11</label>
    </interactant>
    <organismsDiffer>false</organismsDiffer>
    <experiments>3</experiments>
</comment>
<comment type="interaction">
    <interactant intactId="EBI-21529239">
        <id>Q86TI2-2</id>
    </interactant>
    <interactant intactId="EBI-2811583">
        <id>Q9BVL2</id>
        <label>NUP58</label>
    </interactant>
    <organismsDiffer>false</organismsDiffer>
    <experiments>3</experiments>
</comment>
<comment type="interaction">
    <interactant intactId="EBI-21529239">
        <id>Q86TI2-2</id>
    </interactant>
    <interactant intactId="EBI-748974">
        <id>Q96CV9</id>
        <label>OPTN</label>
    </interactant>
    <organismsDiffer>false</organismsDiffer>
    <experiments>3</experiments>
</comment>
<comment type="interaction">
    <interactant intactId="EBI-21529239">
        <id>Q86TI2-2</id>
    </interactant>
    <interactant intactId="EBI-353193">
        <id>Q06830</id>
        <label>PRDX1</label>
    </interactant>
    <organismsDiffer>false</organismsDiffer>
    <experiments>3</experiments>
</comment>
<comment type="interaction">
    <interactant intactId="EBI-21529239">
        <id>Q86TI2-2</id>
    </interactant>
    <interactant intactId="EBI-372475">
        <id>P14678-2</id>
        <label>SNRPB</label>
    </interactant>
    <organismsDiffer>false</organismsDiffer>
    <experiments>3</experiments>
</comment>
<comment type="interaction">
    <interactant intactId="EBI-21529239">
        <id>Q86TI2-2</id>
    </interactant>
    <interactant intactId="EBI-350743">
        <id>P49458</id>
        <label>SRP9</label>
    </interactant>
    <organismsDiffer>false</organismsDiffer>
    <experiments>3</experiments>
</comment>
<comment type="interaction">
    <interactant intactId="EBI-21529239">
        <id>Q86TI2-2</id>
    </interactant>
    <interactant intactId="EBI-717142">
        <id>Q11203</id>
        <label>ST3GAL3</label>
    </interactant>
    <organismsDiffer>false</organismsDiffer>
    <experiments>3</experiments>
</comment>
<comment type="interaction">
    <interactant intactId="EBI-21529239">
        <id>Q86TI2-2</id>
    </interactant>
    <interactant intactId="EBI-372899">
        <id>Q13148</id>
        <label>TARDBP</label>
    </interactant>
    <organismsDiffer>false</organismsDiffer>
    <experiments>6</experiments>
</comment>
<comment type="interaction">
    <interactant intactId="EBI-21529239">
        <id>Q86TI2-2</id>
    </interactant>
    <interactant intactId="EBI-743128">
        <id>P14927</id>
        <label>UQCRB</label>
    </interactant>
    <organismsDiffer>false</organismsDiffer>
    <experiments>3</experiments>
</comment>
<comment type="subcellular location">
    <molecule>Isoform 1</molecule>
    <subcellularLocation>
        <location evidence="4 5">Cytoplasm</location>
        <location evidence="4 5">Cytosol</location>
    </subcellularLocation>
</comment>
<comment type="subcellular location">
    <molecule>Isoform 2</molecule>
    <subcellularLocation>
        <location evidence="8">Nucleus</location>
    </subcellularLocation>
</comment>
<comment type="alternative products">
    <event type="alternative splicing"/>
    <isoform>
        <id>Q86TI2-1</id>
        <name>1</name>
        <name>DPP9-S</name>
        <name>Short</name>
        <sequence type="displayed"/>
    </isoform>
    <isoform>
        <id>Q86TI2-2</id>
        <name>2</name>
        <name>DPP9-L</name>
        <name>Long</name>
        <sequence type="described" ref="VSP_013865"/>
    </isoform>
    <isoform>
        <id>Q86TI2-4</id>
        <name>3</name>
        <sequence type="described" ref="VSP_013869"/>
    </isoform>
</comment>
<comment type="tissue specificity">
    <text evidence="3 4 5">Ubiquitously expressed, with highest levels in liver, heart and muscle, and lowest levels in brain.</text>
</comment>
<comment type="disease" evidence="18">
    <disease id="DI-06660">
        <name>Hatipoglu immunodeficiency syndrome</name>
        <acronym>HATIS</acronym>
        <description>An autosomal recessive immunologic disorder manifesting in infancy or early childhood, and characterized by failure to thrive, short stature, skin pigmentation abnormalities, pancytopenia, and susceptibility to recurrent infections.</description>
        <dbReference type="MIM" id="620331"/>
    </disease>
    <text>The disease is caused by variants affecting the gene represented in this entry.</text>
</comment>
<comment type="miscellaneous">
    <molecule>Isoform 2</molecule>
    <text evidence="8">Active peptidase. Contains a nuclear localization signal at positions 2-9.</text>
</comment>
<comment type="similarity">
    <text evidence="25">Belongs to the peptidase S9B family. DPPIV subfamily.</text>
</comment>
<comment type="sequence caution" evidence="25">
    <conflict type="erroneous gene model prediction">
        <sequence resource="EMBL-CDS" id="AAC33801"/>
    </conflict>
</comment>
<comment type="sequence caution" evidence="25">
    <conflict type="erroneous gene model prediction">
        <sequence resource="EMBL-CDS" id="AAC62840"/>
    </conflict>
</comment>
<comment type="sequence caution" evidence="25">
    <conflict type="erroneous initiation">
        <sequence resource="EMBL-CDS" id="AAH37948"/>
    </conflict>
    <text>Truncated N-terminus.</text>
</comment>
<comment type="sequence caution" evidence="25">
    <conflict type="erroneous initiation">
        <sequence resource="EMBL-CDS" id="AAL47179"/>
    </conflict>
    <text>Truncated N-terminus.</text>
</comment>
<comment type="sequence caution" evidence="25">
    <conflict type="erroneous initiation">
        <sequence resource="EMBL-CDS" id="AAO73880"/>
    </conflict>
    <text>Extended N-terminus.</text>
</comment>
<comment type="sequence caution" evidence="25">
    <conflict type="erroneous initiation">
        <sequence resource="EMBL-CDS" id="BAB70784"/>
    </conflict>
    <text>Truncated N-terminus.</text>
</comment>
<comment type="sequence caution" evidence="25">
    <conflict type="erroneous initiation">
        <sequence resource="EMBL-CDS" id="BAC11362"/>
    </conflict>
    <text>Truncated N-terminus.</text>
</comment>
<comment type="sequence caution" evidence="25">
    <conflict type="miscellaneous discrepancy">
        <sequence resource="EMBL-CDS" id="BAC85150"/>
    </conflict>
    <text>Probable cloning artifact.</text>
</comment>
<comment type="sequence caution" evidence="25">
    <conflict type="miscellaneous discrepancy">
        <sequence resource="EMBL-CDS" id="BAD18643"/>
    </conflict>
    <text>Aberrant splicing.</text>
</comment>
<comment type="sequence caution" evidence="25">
    <conflict type="frameshift">
        <sequence resource="EMBL-CDS" id="CAD39039"/>
    </conflict>
</comment>
<organism>
    <name type="scientific">Homo sapiens</name>
    <name type="common">Human</name>
    <dbReference type="NCBI Taxonomy" id="9606"/>
    <lineage>
        <taxon>Eukaryota</taxon>
        <taxon>Metazoa</taxon>
        <taxon>Chordata</taxon>
        <taxon>Craniata</taxon>
        <taxon>Vertebrata</taxon>
        <taxon>Euteleostomi</taxon>
        <taxon>Mammalia</taxon>
        <taxon>Eutheria</taxon>
        <taxon>Euarchontoglires</taxon>
        <taxon>Primates</taxon>
        <taxon>Haplorrhini</taxon>
        <taxon>Catarrhini</taxon>
        <taxon>Hominidae</taxon>
        <taxon>Homo</taxon>
    </lineage>
</organism>
<feature type="initiator methionine" description="Removed" evidence="34">
    <location>
        <position position="1"/>
    </location>
</feature>
<feature type="chain" id="PRO_0000122415" description="Dipeptidyl peptidase 9">
    <location>
        <begin position="2"/>
        <end position="863"/>
    </location>
</feature>
<feature type="region of interest" description="Disordered" evidence="2">
    <location>
        <begin position="1"/>
        <end position="20"/>
    </location>
</feature>
<feature type="active site" description="Charge relay system" evidence="26">
    <location>
        <position position="730"/>
    </location>
</feature>
<feature type="active site" description="Charge relay system" evidence="1">
    <location>
        <position position="808"/>
    </location>
</feature>
<feature type="active site" description="Charge relay system" evidence="1">
    <location>
        <position position="840"/>
    </location>
</feature>
<feature type="binding site" description="covalent" evidence="16 17 31 33">
    <location>
        <position position="730"/>
    </location>
    <ligand>
        <name>Val-boroPro</name>
        <dbReference type="ChEBI" id="CHEBI:187904"/>
        <note>inhibitor</note>
    </ligand>
</feature>
<feature type="modified residue" description="N-acetylalanine" evidence="34">
    <location>
        <position position="2"/>
    </location>
</feature>
<feature type="splice variant" id="VSP_013865" description="In isoform 2." evidence="20 21 22 23">
    <original>M</original>
    <variation>MRKVKKLRLDKENTGSWRSFSLNSEGAERM</variation>
    <location>
        <position position="1"/>
    </location>
</feature>
<feature type="splice variant" id="VSP_013869" description="In isoform 3." evidence="24">
    <location>
        <begin position="832"/>
        <end position="858"/>
    </location>
</feature>
<feature type="sequence variant" id="VAR_088502" description="In HATIS; likely pathogenic." evidence="18">
    <location>
        <begin position="82"/>
        <end position="863"/>
    </location>
</feature>
<feature type="sequence variant" id="VAR_088503" description="In HATIS; likely pathogenic; decreased dipeptidyl-peptidase activity; less able to maintain NLRP1 in the inactive state." evidence="18">
    <original>G</original>
    <variation>S</variation>
    <location>
        <position position="138"/>
    </location>
</feature>
<feature type="sequence variant" id="VAR_088504" description="In HATIS; likely pathogenic." evidence="18">
    <location>
        <begin position="185"/>
        <end position="863"/>
    </location>
</feature>
<feature type="sequence variant" id="VAR_088505" description="In HATIS; likely pathogenic; no protein detected by Wester blot analysis in homozygous patient cells." evidence="18">
    <location>
        <begin position="822"/>
        <end position="863"/>
    </location>
</feature>
<feature type="mutagenesis site" description="Reduced interaction with CARD8 without affecting the peptidase activity." evidence="17">
    <original>RK</original>
    <variation>EE</variation>
    <location>
        <begin position="96"/>
        <end position="97"/>
    </location>
</feature>
<feature type="mutagenesis site" description="Reduced interaction with NLRP1 and CARD8 without affecting the peptidase activity." evidence="16 17">
    <original>LL</original>
    <variation>EE</variation>
    <location>
        <begin position="100"/>
        <end position="101"/>
    </location>
</feature>
<feature type="mutagenesis site" description="Reduced interaction with CARD8 without affecting the peptidase activity." evidence="17">
    <original>LL</original>
    <variation>EE</variation>
    <location>
        <begin position="102"/>
        <end position="103"/>
    </location>
</feature>
<feature type="mutagenesis site" description="Reduced interaction with NLRP1 without affecting the peptidase activity." evidence="15">
    <original>L</original>
    <variation>E</variation>
    <location>
        <position position="102"/>
    </location>
</feature>
<feature type="mutagenesis site" description="Reduced interaction with NLRP1 without affecting the peptidase activity." evidence="16">
    <original>E</original>
    <variation>R</variation>
    <location>
        <position position="597"/>
    </location>
</feature>
<feature type="mutagenesis site" description="Abolished dipeptidyl peptidase activity and ability to sequester NLRP1 and inhibit pyroptosis." evidence="12 15">
    <original>S</original>
    <variation>A</variation>
    <location>
        <position position="730"/>
    </location>
</feature>
<feature type="sequence conflict" description="In Ref. 3; AAO73880/AAQ83119." evidence="25" ref="3">
    <original>I</original>
    <variation>N</variation>
    <location>
        <position position="204"/>
    </location>
</feature>
<feature type="sequence conflict" description="In Ref. 9; CAD39039." evidence="25" ref="9">
    <original>L</original>
    <variation>F</variation>
    <location>
        <position position="461"/>
    </location>
</feature>
<feature type="sequence conflict" description="In Ref. 5; BAC85150." evidence="25" ref="5">
    <original>C</original>
    <variation>W</variation>
    <location>
        <position position="571"/>
    </location>
</feature>
<feature type="sequence conflict" description="In Ref. 5; BAD18643." evidence="25" ref="5">
    <original>L</original>
    <variation>P</variation>
    <location>
        <position position="709"/>
    </location>
</feature>
<feature type="sequence conflict" description="In Ref. 5; BAB70784." evidence="25" ref="5">
    <original>G</original>
    <variation>C</variation>
    <location>
        <position position="753"/>
    </location>
</feature>
<feature type="turn" evidence="39">
    <location>
        <begin position="20"/>
        <end position="22"/>
    </location>
</feature>
<feature type="helix" evidence="40">
    <location>
        <begin position="31"/>
        <end position="48"/>
    </location>
</feature>
<feature type="strand" evidence="40">
    <location>
        <begin position="54"/>
        <end position="60"/>
    </location>
</feature>
<feature type="strand" evidence="40">
    <location>
        <begin position="64"/>
        <end position="76"/>
    </location>
</feature>
<feature type="strand" evidence="40">
    <location>
        <begin position="82"/>
        <end position="93"/>
    </location>
</feature>
<feature type="strand" evidence="39">
    <location>
        <begin position="97"/>
        <end position="99"/>
    </location>
</feature>
<feature type="strand" evidence="37">
    <location>
        <begin position="100"/>
        <end position="102"/>
    </location>
</feature>
<feature type="strand" evidence="40">
    <location>
        <begin position="106"/>
        <end position="111"/>
    </location>
</feature>
<feature type="helix" evidence="40">
    <location>
        <begin position="117"/>
        <end position="119"/>
    </location>
</feature>
<feature type="helix" evidence="40">
    <location>
        <begin position="123"/>
        <end position="131"/>
    </location>
</feature>
<feature type="strand" evidence="40">
    <location>
        <begin position="143"/>
        <end position="145"/>
    </location>
</feature>
<feature type="turn" evidence="40">
    <location>
        <begin position="146"/>
        <end position="149"/>
    </location>
</feature>
<feature type="strand" evidence="40">
    <location>
        <begin position="150"/>
        <end position="155"/>
    </location>
</feature>
<feature type="strand" evidence="40">
    <location>
        <begin position="158"/>
        <end position="163"/>
    </location>
</feature>
<feature type="turn" evidence="40">
    <location>
        <begin position="166"/>
        <end position="168"/>
    </location>
</feature>
<feature type="strand" evidence="37">
    <location>
        <begin position="178"/>
        <end position="180"/>
    </location>
</feature>
<feature type="strand" evidence="37">
    <location>
        <begin position="183"/>
        <end position="186"/>
    </location>
</feature>
<feature type="strand" evidence="40">
    <location>
        <begin position="189"/>
        <end position="193"/>
    </location>
</feature>
<feature type="strand" evidence="40">
    <location>
        <begin position="200"/>
        <end position="205"/>
    </location>
</feature>
<feature type="strand" evidence="40">
    <location>
        <begin position="208"/>
        <end position="213"/>
    </location>
</feature>
<feature type="turn" evidence="40">
    <location>
        <begin position="214"/>
        <end position="216"/>
    </location>
</feature>
<feature type="strand" evidence="40">
    <location>
        <begin position="219"/>
        <end position="221"/>
    </location>
</feature>
<feature type="helix" evidence="40">
    <location>
        <begin position="232"/>
        <end position="234"/>
    </location>
</feature>
<feature type="strand" evidence="40">
    <location>
        <begin position="237"/>
        <end position="240"/>
    </location>
</feature>
<feature type="helix" evidence="40">
    <location>
        <begin position="244"/>
        <end position="250"/>
    </location>
</feature>
<feature type="strand" evidence="40">
    <location>
        <begin position="255"/>
        <end position="258"/>
    </location>
</feature>
<feature type="strand" evidence="39">
    <location>
        <begin position="266"/>
        <end position="269"/>
    </location>
</feature>
<feature type="strand" evidence="40">
    <location>
        <begin position="271"/>
        <end position="281"/>
    </location>
</feature>
<feature type="strand" evidence="35">
    <location>
        <begin position="283"/>
        <end position="285"/>
    </location>
</feature>
<feature type="strand" evidence="40">
    <location>
        <begin position="287"/>
        <end position="291"/>
    </location>
</feature>
<feature type="helix" evidence="40">
    <location>
        <begin position="295"/>
        <end position="297"/>
    </location>
</feature>
<feature type="strand" evidence="40">
    <location>
        <begin position="300"/>
        <end position="304"/>
    </location>
</feature>
<feature type="strand" evidence="37">
    <location>
        <begin position="307"/>
        <end position="310"/>
    </location>
</feature>
<feature type="strand" evidence="40">
    <location>
        <begin position="314"/>
        <end position="324"/>
    </location>
</feature>
<feature type="strand" evidence="40">
    <location>
        <begin position="330"/>
        <end position="340"/>
    </location>
</feature>
<feature type="helix" evidence="40">
    <location>
        <begin position="342"/>
        <end position="345"/>
    </location>
</feature>
<feature type="strand" evidence="40">
    <location>
        <begin position="351"/>
        <end position="357"/>
    </location>
</feature>
<feature type="strand" evidence="40">
    <location>
        <begin position="364"/>
        <end position="369"/>
    </location>
</feature>
<feature type="strand" evidence="36">
    <location>
        <begin position="371"/>
        <end position="373"/>
    </location>
</feature>
<feature type="strand" evidence="40">
    <location>
        <begin position="375"/>
        <end position="381"/>
    </location>
</feature>
<feature type="helix" evidence="40">
    <location>
        <begin position="383"/>
        <end position="385"/>
    </location>
</feature>
<feature type="strand" evidence="40">
    <location>
        <begin position="386"/>
        <end position="388"/>
    </location>
</feature>
<feature type="helix" evidence="40">
    <location>
        <begin position="393"/>
        <end position="402"/>
    </location>
</feature>
<feature type="strand" evidence="40">
    <location>
        <begin position="410"/>
        <end position="416"/>
    </location>
</feature>
<feature type="strand" evidence="40">
    <location>
        <begin position="427"/>
        <end position="429"/>
    </location>
</feature>
<feature type="strand" evidence="37">
    <location>
        <begin position="434"/>
        <end position="437"/>
    </location>
</feature>
<feature type="strand" evidence="40">
    <location>
        <begin position="438"/>
        <end position="446"/>
    </location>
</feature>
<feature type="turn" evidence="40">
    <location>
        <begin position="447"/>
        <end position="449"/>
    </location>
</feature>
<feature type="strand" evidence="40">
    <location>
        <begin position="453"/>
        <end position="460"/>
    </location>
</feature>
<feature type="strand" evidence="39">
    <location>
        <begin position="468"/>
        <end position="470"/>
    </location>
</feature>
<feature type="turn" evidence="40">
    <location>
        <begin position="476"/>
        <end position="479"/>
    </location>
</feature>
<feature type="strand" evidence="40">
    <location>
        <begin position="483"/>
        <end position="490"/>
    </location>
</feature>
<feature type="strand" evidence="40">
    <location>
        <begin position="492"/>
        <end position="494"/>
    </location>
</feature>
<feature type="strand" evidence="40">
    <location>
        <begin position="505"/>
        <end position="507"/>
    </location>
</feature>
<feature type="turn" evidence="40">
    <location>
        <begin position="508"/>
        <end position="511"/>
    </location>
</feature>
<feature type="strand" evidence="40">
    <location>
        <begin position="512"/>
        <end position="517"/>
    </location>
</feature>
<feature type="strand" evidence="40">
    <location>
        <begin position="526"/>
        <end position="534"/>
    </location>
</feature>
<feature type="strand" evidence="40">
    <location>
        <begin position="546"/>
        <end position="552"/>
    </location>
</feature>
<feature type="strand" evidence="40">
    <location>
        <begin position="556"/>
        <end position="564"/>
    </location>
</feature>
<feature type="strand" evidence="40">
    <location>
        <begin position="566"/>
        <end position="568"/>
    </location>
</feature>
<feature type="strand" evidence="40">
    <location>
        <begin position="571"/>
        <end position="579"/>
    </location>
</feature>
<feature type="helix" evidence="40">
    <location>
        <begin position="584"/>
        <end position="586"/>
    </location>
</feature>
<feature type="strand" evidence="40">
    <location>
        <begin position="588"/>
        <end position="596"/>
    </location>
</feature>
<feature type="strand" evidence="40">
    <location>
        <begin position="609"/>
        <end position="614"/>
    </location>
</feature>
<feature type="strand" evidence="40">
    <location>
        <begin position="620"/>
        <end position="626"/>
    </location>
</feature>
<feature type="strand" evidence="40">
    <location>
        <begin position="636"/>
        <end position="642"/>
    </location>
</feature>
<feature type="strand" evidence="40">
    <location>
        <begin position="653"/>
        <end position="655"/>
    </location>
</feature>
<feature type="turn" evidence="40">
    <location>
        <begin position="658"/>
        <end position="660"/>
    </location>
</feature>
<feature type="helix" evidence="40">
    <location>
        <begin position="662"/>
        <end position="669"/>
    </location>
</feature>
<feature type="strand" evidence="40">
    <location>
        <begin position="673"/>
        <end position="678"/>
    </location>
</feature>
<feature type="strand" evidence="40">
    <location>
        <begin position="683"/>
        <end position="685"/>
    </location>
</feature>
<feature type="helix" evidence="40">
    <location>
        <begin position="687"/>
        <end position="690"/>
    </location>
</feature>
<feature type="helix" evidence="40">
    <location>
        <begin position="691"/>
        <end position="693"/>
    </location>
</feature>
<feature type="turn" evidence="40">
    <location>
        <begin position="697"/>
        <end position="700"/>
    </location>
</feature>
<feature type="helix" evidence="40">
    <location>
        <begin position="701"/>
        <end position="716"/>
    </location>
</feature>
<feature type="strand" evidence="40">
    <location>
        <begin position="719"/>
        <end position="729"/>
    </location>
</feature>
<feature type="helix" evidence="40">
    <location>
        <begin position="731"/>
        <end position="742"/>
    </location>
</feature>
<feature type="turn" evidence="40">
    <location>
        <begin position="744"/>
        <end position="746"/>
    </location>
</feature>
<feature type="strand" evidence="40">
    <location>
        <begin position="748"/>
        <end position="754"/>
    </location>
</feature>
<feature type="helix" evidence="40">
    <location>
        <begin position="759"/>
        <end position="761"/>
    </location>
</feature>
<feature type="helix" evidence="40">
    <location>
        <begin position="764"/>
        <end position="771"/>
    </location>
</feature>
<feature type="helix" evidence="40">
    <location>
        <begin position="774"/>
        <end position="776"/>
    </location>
</feature>
<feature type="helix" evidence="40">
    <location>
        <begin position="778"/>
        <end position="784"/>
    </location>
</feature>
<feature type="helix" evidence="40">
    <location>
        <begin position="786"/>
        <end position="792"/>
    </location>
</feature>
<feature type="strand" evidence="38">
    <location>
        <begin position="795"/>
        <end position="798"/>
    </location>
</feature>
<feature type="strand" evidence="40">
    <location>
        <begin position="799"/>
        <end position="805"/>
    </location>
</feature>
<feature type="strand" evidence="40">
    <location>
        <begin position="809"/>
        <end position="811"/>
    </location>
</feature>
<feature type="helix" evidence="40">
    <location>
        <begin position="814"/>
        <end position="825"/>
    </location>
</feature>
<feature type="strand" evidence="40">
    <location>
        <begin position="831"/>
        <end position="835"/>
    </location>
</feature>
<feature type="strand" evidence="40">
    <location>
        <begin position="839"/>
        <end position="841"/>
    </location>
</feature>
<feature type="helix" evidence="40">
    <location>
        <begin position="845"/>
        <end position="862"/>
    </location>
</feature>
<protein>
    <recommendedName>
        <fullName evidence="20">Dipeptidyl peptidase 9</fullName>
        <shortName>DP9</shortName>
        <ecNumber evidence="4 6 7 10 12 15">3.4.14.5</ecNumber>
    </recommendedName>
    <alternativeName>
        <fullName>Dipeptidyl peptidase IV-related protein 2</fullName>
        <shortName>DPRP-2</shortName>
    </alternativeName>
    <alternativeName>
        <fullName>Dipeptidyl peptidase IX</fullName>
        <shortName>DPP IX</shortName>
    </alternativeName>
    <alternativeName>
        <fullName>Dipeptidyl peptidase-like protein 9</fullName>
        <shortName>DPLP9</shortName>
    </alternativeName>
</protein>
<name>DPP9_HUMAN</name>
<gene>
    <name evidence="20 27" type="primary">DPP9</name>
    <name type="synonym">DPRP2</name>
</gene>
<evidence type="ECO:0000250" key="1">
    <source>
        <dbReference type="UniProtKB" id="Q6V1X1"/>
    </source>
</evidence>
<evidence type="ECO:0000256" key="2">
    <source>
        <dbReference type="SAM" id="MobiDB-lite"/>
    </source>
</evidence>
<evidence type="ECO:0000269" key="3">
    <source>
    </source>
</evidence>
<evidence type="ECO:0000269" key="4">
    <source>
    </source>
</evidence>
<evidence type="ECO:0000269" key="5">
    <source>
    </source>
</evidence>
<evidence type="ECO:0000269" key="6">
    <source>
    </source>
</evidence>
<evidence type="ECO:0000269" key="7">
    <source>
    </source>
</evidence>
<evidence type="ECO:0000269" key="8">
    <source>
    </source>
</evidence>
<evidence type="ECO:0000269" key="9">
    <source>
    </source>
</evidence>
<evidence type="ECO:0000269" key="10">
    <source>
    </source>
</evidence>
<evidence type="ECO:0000269" key="11">
    <source>
    </source>
</evidence>
<evidence type="ECO:0000269" key="12">
    <source>
    </source>
</evidence>
<evidence type="ECO:0000269" key="13">
    <source>
    </source>
</evidence>
<evidence type="ECO:0000269" key="14">
    <source>
    </source>
</evidence>
<evidence type="ECO:0000269" key="15">
    <source>
    </source>
</evidence>
<evidence type="ECO:0000269" key="16">
    <source>
    </source>
</evidence>
<evidence type="ECO:0000269" key="17">
    <source>
    </source>
</evidence>
<evidence type="ECO:0000269" key="18">
    <source>
    </source>
</evidence>
<evidence type="ECO:0000269" key="19">
    <source>
    </source>
</evidence>
<evidence type="ECO:0000303" key="20">
    <source>
    </source>
</evidence>
<evidence type="ECO:0000303" key="21">
    <source>
    </source>
</evidence>
<evidence type="ECO:0000303" key="22">
    <source>
    </source>
</evidence>
<evidence type="ECO:0000303" key="23">
    <source>
    </source>
</evidence>
<evidence type="ECO:0000303" key="24">
    <source>
    </source>
</evidence>
<evidence type="ECO:0000305" key="25"/>
<evidence type="ECO:0000305" key="26">
    <source>
    </source>
</evidence>
<evidence type="ECO:0000312" key="27">
    <source>
        <dbReference type="HGNC" id="HGNC:18648"/>
    </source>
</evidence>
<evidence type="ECO:0007744" key="28">
    <source>
        <dbReference type="PDB" id="6EOQ"/>
    </source>
</evidence>
<evidence type="ECO:0007744" key="29">
    <source>
        <dbReference type="PDB" id="6EOR"/>
    </source>
</evidence>
<evidence type="ECO:0007744" key="30">
    <source>
        <dbReference type="PDB" id="6X6A"/>
    </source>
</evidence>
<evidence type="ECO:0007744" key="31">
    <source>
        <dbReference type="PDB" id="6X6C"/>
    </source>
</evidence>
<evidence type="ECO:0007744" key="32">
    <source>
        <dbReference type="PDB" id="7JKQ"/>
    </source>
</evidence>
<evidence type="ECO:0007744" key="33">
    <source>
        <dbReference type="PDB" id="7JN7"/>
    </source>
</evidence>
<evidence type="ECO:0007744" key="34">
    <source>
    </source>
</evidence>
<evidence type="ECO:0007829" key="35">
    <source>
        <dbReference type="PDB" id="6EOQ"/>
    </source>
</evidence>
<evidence type="ECO:0007829" key="36">
    <source>
        <dbReference type="PDB" id="6QZV"/>
    </source>
</evidence>
<evidence type="ECO:0007829" key="37">
    <source>
        <dbReference type="PDB" id="6X6C"/>
    </source>
</evidence>
<evidence type="ECO:0007829" key="38">
    <source>
        <dbReference type="PDB" id="7JN7"/>
    </source>
</evidence>
<evidence type="ECO:0007829" key="39">
    <source>
        <dbReference type="PDB" id="7SVL"/>
    </source>
</evidence>
<evidence type="ECO:0007829" key="40">
    <source>
        <dbReference type="PDB" id="7ZXS"/>
    </source>
</evidence>
<reference key="1">
    <citation type="journal article" date="2002" name="Gene">
        <title>Identification and characterization of human DPP9, a novel homologue of dipeptidyl peptidase IV.</title>
        <authorList>
            <person name="Olsen C."/>
            <person name="Wagtmann N."/>
        </authorList>
    </citation>
    <scope>NUCLEOTIDE SEQUENCE [MRNA] (ISOFORM 2)</scope>
    <scope>TISSUE SPECIFICITY</scope>
</reference>
<reference key="2">
    <citation type="journal article" date="2003" name="Biochem. J.">
        <title>Cloning and characterization of dipeptidyl peptidase 10, a new member of an emerging subgroup of serine proteases.</title>
        <authorList>
            <person name="Qi S.Y."/>
            <person name="Riviere P.J."/>
            <person name="Trojnar J."/>
            <person name="Junien J.-L."/>
            <person name="Akinsanya K.O."/>
        </authorList>
    </citation>
    <scope>NUCLEOTIDE SEQUENCE [MRNA] (ISOFORM 1)</scope>
    <scope>FUNCTION</scope>
    <scope>CATALYTIC ACTIVITY</scope>
    <scope>BIOPHYSICOCHEMICAL PROPERTIES</scope>
    <scope>ACTIVITY REGULATION</scope>
    <scope>TISSUE SPECIFICITY</scope>
    <scope>SUBCELLULAR LOCATION</scope>
    <source>
        <tissue>Colon</tissue>
    </source>
</reference>
<reference key="3">
    <citation type="journal article" date="2004" name="Biochim. Biophys. Acta">
        <title>Dipeptidyl peptidase 9 has two forms, a broad tissue distribution, cytoplasmic localization and DPIV-like peptidase activity.</title>
        <authorList>
            <person name="Ajami K."/>
            <person name="Abbott C.A."/>
            <person name="McCaughan G.W."/>
            <person name="Gorrell M.D."/>
        </authorList>
    </citation>
    <scope>NUCLEOTIDE SEQUENCE [MRNA] (ISOFORMS 1 AND 2)</scope>
    <scope>CATALYTIC ACTIVITY</scope>
    <scope>BIOPHYSICOCHEMICAL PROPERTIES</scope>
    <scope>TISSUE SPECIFICITY</scope>
    <scope>SUBCELLULAR LOCATION</scope>
</reference>
<reference key="4">
    <citation type="journal article" date="2006" name="Biochem. J.">
        <title>Dipeptidyl peptidases 8 and 9: specificity and molecular characterization compared with dipeptidyl peptidase IV.</title>
        <authorList>
            <person name="Bjelke J.R."/>
            <person name="Christensen J."/>
            <person name="Nielsen P.F."/>
            <person name="Branner S."/>
            <person name="Kanstrup A.B."/>
            <person name="Wagtmann N."/>
            <person name="Rasmussen H.B."/>
        </authorList>
    </citation>
    <scope>NUCLEOTIDE SEQUENCE [MRNA]</scope>
    <scope>FUNCTION</scope>
    <scope>CATALYTIC ACTIVITY</scope>
    <scope>SUBUNIT</scope>
</reference>
<reference key="5">
    <citation type="journal article" date="2004" name="Nat. Genet.">
        <title>Complete sequencing and characterization of 21,243 full-length human cDNAs.</title>
        <authorList>
            <person name="Ota T."/>
            <person name="Suzuki Y."/>
            <person name="Nishikawa T."/>
            <person name="Otsuki T."/>
            <person name="Sugiyama T."/>
            <person name="Irie R."/>
            <person name="Wakamatsu A."/>
            <person name="Hayashi K."/>
            <person name="Sato H."/>
            <person name="Nagai K."/>
            <person name="Kimura K."/>
            <person name="Makita H."/>
            <person name="Sekine M."/>
            <person name="Obayashi M."/>
            <person name="Nishi T."/>
            <person name="Shibahara T."/>
            <person name="Tanaka T."/>
            <person name="Ishii S."/>
            <person name="Yamamoto J."/>
            <person name="Saito K."/>
            <person name="Kawai Y."/>
            <person name="Isono Y."/>
            <person name="Nakamura Y."/>
            <person name="Nagahari K."/>
            <person name="Murakami K."/>
            <person name="Yasuda T."/>
            <person name="Iwayanagi T."/>
            <person name="Wagatsuma M."/>
            <person name="Shiratori A."/>
            <person name="Sudo H."/>
            <person name="Hosoiri T."/>
            <person name="Kaku Y."/>
            <person name="Kodaira H."/>
            <person name="Kondo H."/>
            <person name="Sugawara M."/>
            <person name="Takahashi M."/>
            <person name="Kanda K."/>
            <person name="Yokoi T."/>
            <person name="Furuya T."/>
            <person name="Kikkawa E."/>
            <person name="Omura Y."/>
            <person name="Abe K."/>
            <person name="Kamihara K."/>
            <person name="Katsuta N."/>
            <person name="Sato K."/>
            <person name="Tanikawa M."/>
            <person name="Yamazaki M."/>
            <person name="Ninomiya K."/>
            <person name="Ishibashi T."/>
            <person name="Yamashita H."/>
            <person name="Murakawa K."/>
            <person name="Fujimori K."/>
            <person name="Tanai H."/>
            <person name="Kimata M."/>
            <person name="Watanabe M."/>
            <person name="Hiraoka S."/>
            <person name="Chiba Y."/>
            <person name="Ishida S."/>
            <person name="Ono Y."/>
            <person name="Takiguchi S."/>
            <person name="Watanabe S."/>
            <person name="Yosida M."/>
            <person name="Hotuta T."/>
            <person name="Kusano J."/>
            <person name="Kanehori K."/>
            <person name="Takahashi-Fujii A."/>
            <person name="Hara H."/>
            <person name="Tanase T.-O."/>
            <person name="Nomura Y."/>
            <person name="Togiya S."/>
            <person name="Komai F."/>
            <person name="Hara R."/>
            <person name="Takeuchi K."/>
            <person name="Arita M."/>
            <person name="Imose N."/>
            <person name="Musashino K."/>
            <person name="Yuuki H."/>
            <person name="Oshima A."/>
            <person name="Sasaki N."/>
            <person name="Aotsuka S."/>
            <person name="Yoshikawa Y."/>
            <person name="Matsunawa H."/>
            <person name="Ichihara T."/>
            <person name="Shiohata N."/>
            <person name="Sano S."/>
            <person name="Moriya S."/>
            <person name="Momiyama H."/>
            <person name="Satoh N."/>
            <person name="Takami S."/>
            <person name="Terashima Y."/>
            <person name="Suzuki O."/>
            <person name="Nakagawa S."/>
            <person name="Senoh A."/>
            <person name="Mizoguchi H."/>
            <person name="Goto Y."/>
            <person name="Shimizu F."/>
            <person name="Wakebe H."/>
            <person name="Hishigaki H."/>
            <person name="Watanabe T."/>
            <person name="Sugiyama A."/>
            <person name="Takemoto M."/>
            <person name="Kawakami B."/>
            <person name="Yamazaki M."/>
            <person name="Watanabe K."/>
            <person name="Kumagai A."/>
            <person name="Itakura S."/>
            <person name="Fukuzumi Y."/>
            <person name="Fujimori Y."/>
            <person name="Komiyama M."/>
            <person name="Tashiro H."/>
            <person name="Tanigami A."/>
            <person name="Fujiwara T."/>
            <person name="Ono T."/>
            <person name="Yamada K."/>
            <person name="Fujii Y."/>
            <person name="Ozaki K."/>
            <person name="Hirao M."/>
            <person name="Ohmori Y."/>
            <person name="Kawabata A."/>
            <person name="Hikiji T."/>
            <person name="Kobatake N."/>
            <person name="Inagaki H."/>
            <person name="Ikema Y."/>
            <person name="Okamoto S."/>
            <person name="Okitani R."/>
            <person name="Kawakami T."/>
            <person name="Noguchi S."/>
            <person name="Itoh T."/>
            <person name="Shigeta K."/>
            <person name="Senba T."/>
            <person name="Matsumura K."/>
            <person name="Nakajima Y."/>
            <person name="Mizuno T."/>
            <person name="Morinaga M."/>
            <person name="Sasaki M."/>
            <person name="Togashi T."/>
            <person name="Oyama M."/>
            <person name="Hata H."/>
            <person name="Watanabe M."/>
            <person name="Komatsu T."/>
            <person name="Mizushima-Sugano J."/>
            <person name="Satoh T."/>
            <person name="Shirai Y."/>
            <person name="Takahashi Y."/>
            <person name="Nakagawa K."/>
            <person name="Okumura K."/>
            <person name="Nagase T."/>
            <person name="Nomura N."/>
            <person name="Kikuchi H."/>
            <person name="Masuho Y."/>
            <person name="Yamashita R."/>
            <person name="Nakai K."/>
            <person name="Yada T."/>
            <person name="Nakamura Y."/>
            <person name="Ohara O."/>
            <person name="Isogai T."/>
            <person name="Sugano S."/>
        </authorList>
    </citation>
    <scope>NUCLEOTIDE SEQUENCE [LARGE SCALE MRNA] (ISOFORM 2)</scope>
    <scope>NUCLEOTIDE SEQUENCE [LARGE SCALE MRNA] OF 30-649 (ISOFORMS 1/3)</scope>
    <source>
        <tissue>Glial tumor</tissue>
        <tissue>Ovary</tissue>
        <tissue>Spleen</tissue>
        <tissue>Trachea</tissue>
    </source>
</reference>
<reference key="6">
    <citation type="journal article" date="2004" name="Nature">
        <title>The DNA sequence and biology of human chromosome 19.</title>
        <authorList>
            <person name="Grimwood J."/>
            <person name="Gordon L.A."/>
            <person name="Olsen A.S."/>
            <person name="Terry A."/>
            <person name="Schmutz J."/>
            <person name="Lamerdin J.E."/>
            <person name="Hellsten U."/>
            <person name="Goodstein D."/>
            <person name="Couronne O."/>
            <person name="Tran-Gyamfi M."/>
            <person name="Aerts A."/>
            <person name="Altherr M."/>
            <person name="Ashworth L."/>
            <person name="Bajorek E."/>
            <person name="Black S."/>
            <person name="Branscomb E."/>
            <person name="Caenepeel S."/>
            <person name="Carrano A.V."/>
            <person name="Caoile C."/>
            <person name="Chan Y.M."/>
            <person name="Christensen M."/>
            <person name="Cleland C.A."/>
            <person name="Copeland A."/>
            <person name="Dalin E."/>
            <person name="Dehal P."/>
            <person name="Denys M."/>
            <person name="Detter J.C."/>
            <person name="Escobar J."/>
            <person name="Flowers D."/>
            <person name="Fotopulos D."/>
            <person name="Garcia C."/>
            <person name="Georgescu A.M."/>
            <person name="Glavina T."/>
            <person name="Gomez M."/>
            <person name="Gonzales E."/>
            <person name="Groza M."/>
            <person name="Hammon N."/>
            <person name="Hawkins T."/>
            <person name="Haydu L."/>
            <person name="Ho I."/>
            <person name="Huang W."/>
            <person name="Israni S."/>
            <person name="Jett J."/>
            <person name="Kadner K."/>
            <person name="Kimball H."/>
            <person name="Kobayashi A."/>
            <person name="Larionov V."/>
            <person name="Leem S.-H."/>
            <person name="Lopez F."/>
            <person name="Lou Y."/>
            <person name="Lowry S."/>
            <person name="Malfatti S."/>
            <person name="Martinez D."/>
            <person name="McCready P.M."/>
            <person name="Medina C."/>
            <person name="Morgan J."/>
            <person name="Nelson K."/>
            <person name="Nolan M."/>
            <person name="Ovcharenko I."/>
            <person name="Pitluck S."/>
            <person name="Pollard M."/>
            <person name="Popkie A.P."/>
            <person name="Predki P."/>
            <person name="Quan G."/>
            <person name="Ramirez L."/>
            <person name="Rash S."/>
            <person name="Retterer J."/>
            <person name="Rodriguez A."/>
            <person name="Rogers S."/>
            <person name="Salamov A."/>
            <person name="Salazar A."/>
            <person name="She X."/>
            <person name="Smith D."/>
            <person name="Slezak T."/>
            <person name="Solovyev V."/>
            <person name="Thayer N."/>
            <person name="Tice H."/>
            <person name="Tsai M."/>
            <person name="Ustaszewska A."/>
            <person name="Vo N."/>
            <person name="Wagner M."/>
            <person name="Wheeler J."/>
            <person name="Wu K."/>
            <person name="Xie G."/>
            <person name="Yang J."/>
            <person name="Dubchak I."/>
            <person name="Furey T.S."/>
            <person name="DeJong P."/>
            <person name="Dickson M."/>
            <person name="Gordon D."/>
            <person name="Eichler E.E."/>
            <person name="Pennacchio L.A."/>
            <person name="Richardson P."/>
            <person name="Stubbs L."/>
            <person name="Rokhsar D.S."/>
            <person name="Myers R.M."/>
            <person name="Rubin E.M."/>
            <person name="Lucas S.M."/>
        </authorList>
    </citation>
    <scope>NUCLEOTIDE SEQUENCE [LARGE SCALE GENOMIC DNA]</scope>
</reference>
<reference key="7">
    <citation type="submission" date="2005-09" db="EMBL/GenBank/DDBJ databases">
        <authorList>
            <person name="Mural R.J."/>
            <person name="Istrail S."/>
            <person name="Sutton G."/>
            <person name="Florea L."/>
            <person name="Halpern A.L."/>
            <person name="Mobarry C.M."/>
            <person name="Lippert R."/>
            <person name="Walenz B."/>
            <person name="Shatkay H."/>
            <person name="Dew I."/>
            <person name="Miller J.R."/>
            <person name="Flanigan M.J."/>
            <person name="Edwards N.J."/>
            <person name="Bolanos R."/>
            <person name="Fasulo D."/>
            <person name="Halldorsson B.V."/>
            <person name="Hannenhalli S."/>
            <person name="Turner R."/>
            <person name="Yooseph S."/>
            <person name="Lu F."/>
            <person name="Nusskern D.R."/>
            <person name="Shue B.C."/>
            <person name="Zheng X.H."/>
            <person name="Zhong F."/>
            <person name="Delcher A.L."/>
            <person name="Huson D.H."/>
            <person name="Kravitz S.A."/>
            <person name="Mouchard L."/>
            <person name="Reinert K."/>
            <person name="Remington K.A."/>
            <person name="Clark A.G."/>
            <person name="Waterman M.S."/>
            <person name="Eichler E.E."/>
            <person name="Adams M.D."/>
            <person name="Hunkapiller M.W."/>
            <person name="Myers E.W."/>
            <person name="Venter J.C."/>
        </authorList>
    </citation>
    <scope>NUCLEOTIDE SEQUENCE [LARGE SCALE GENOMIC DNA]</scope>
</reference>
<reference key="8">
    <citation type="journal article" date="2004" name="Genome Res.">
        <title>The status, quality, and expansion of the NIH full-length cDNA project: the Mammalian Gene Collection (MGC).</title>
        <authorList>
            <consortium name="The MGC Project Team"/>
        </authorList>
    </citation>
    <scope>NUCLEOTIDE SEQUENCE [LARGE SCALE MRNA] (ISOFORM 2)</scope>
    <source>
        <tissue>Placenta</tissue>
        <tissue>Skin</tissue>
    </source>
</reference>
<reference key="9">
    <citation type="journal article" date="2007" name="BMC Genomics">
        <title>The full-ORF clone resource of the German cDNA consortium.</title>
        <authorList>
            <person name="Bechtel S."/>
            <person name="Rosenfelder H."/>
            <person name="Duda A."/>
            <person name="Schmidt C.P."/>
            <person name="Ernst U."/>
            <person name="Wellenreuther R."/>
            <person name="Mehrle A."/>
            <person name="Schuster C."/>
            <person name="Bahr A."/>
            <person name="Bloecker H."/>
            <person name="Heubner D."/>
            <person name="Hoerlein A."/>
            <person name="Michel G."/>
            <person name="Wedler H."/>
            <person name="Koehrer K."/>
            <person name="Ottenwaelder B."/>
            <person name="Poustka A."/>
            <person name="Wiemann S."/>
            <person name="Schupp I."/>
        </authorList>
    </citation>
    <scope>NUCLEOTIDE SEQUENCE [LARGE SCALE MRNA] OF 209-863 (ISOFORM 3)</scope>
    <scope>NUCLEOTIDE SEQUENCE [LARGE SCALE MRNA] OF 298-863 (ISOFORMS 1/2)</scope>
    <source>
        <tissue>Melanoma</tissue>
    </source>
</reference>
<reference key="10">
    <citation type="journal article" date="2009" name="Anal. Chem.">
        <title>Lys-N and trypsin cover complementary parts of the phosphoproteome in a refined SCX-based approach.</title>
        <authorList>
            <person name="Gauci S."/>
            <person name="Helbig A.O."/>
            <person name="Slijper M."/>
            <person name="Krijgsveld J."/>
            <person name="Heck A.J."/>
            <person name="Mohammed S."/>
        </authorList>
    </citation>
    <scope>ACETYLATION [LARGE SCALE ANALYSIS] AT ALA-2</scope>
    <scope>CLEAVAGE OF INITIATOR METHIONINE [LARGE SCALE ANALYSIS]</scope>
    <scope>IDENTIFICATION BY MASS SPECTROMETRY [LARGE SCALE ANALYSIS]</scope>
</reference>
<reference key="11">
    <citation type="journal article" date="2009" name="J. Biol. Chem.">
        <title>The cytoplasmic peptidase DPP9 is rate-limiting for degradation of proline-containing peptides.</title>
        <authorList>
            <person name="Geiss-Friedlander R."/>
            <person name="Parmentier N."/>
            <person name="Moeller U."/>
            <person name="Urlaub H."/>
            <person name="Van den Eynde B.J."/>
            <person name="Melchior F."/>
        </authorList>
    </citation>
    <scope>FUNCTION</scope>
    <scope>CATALYTIC ACTIVITY</scope>
</reference>
<reference key="12">
    <citation type="journal article" date="2011" name="BMC Syst. Biol.">
        <title>Initial characterization of the human central proteome.</title>
        <authorList>
            <person name="Burkard T.R."/>
            <person name="Planyavsky M."/>
            <person name="Kaupe I."/>
            <person name="Breitwieser F.P."/>
            <person name="Buerckstuemmer T."/>
            <person name="Bennett K.L."/>
            <person name="Superti-Furga G."/>
            <person name="Colinge J."/>
        </authorList>
    </citation>
    <scope>IDENTIFICATION BY MASS SPECTROMETRY [LARGE SCALE ANALYSIS]</scope>
</reference>
<reference key="13">
    <citation type="journal article" date="2013" name="J. Proteome Res.">
        <title>Toward a comprehensive characterization of a human cancer cell phosphoproteome.</title>
        <authorList>
            <person name="Zhou H."/>
            <person name="Di Palma S."/>
            <person name="Preisinger C."/>
            <person name="Peng M."/>
            <person name="Polat A.N."/>
            <person name="Heck A.J."/>
            <person name="Mohammed S."/>
        </authorList>
    </citation>
    <scope>IDENTIFICATION BY MASS SPECTROMETRY [LARGE SCALE ANALYSIS]</scope>
    <source>
        <tissue>Erythroleukemia</tissue>
    </source>
</reference>
<reference key="14">
    <citation type="journal article" date="2014" name="Cell. Mol. Life Sci.">
        <title>The amino terminus extension in the long dipeptidyl peptidase 9 isoform contains a nuclear localization signal targeting the active peptidase to the nucleus.</title>
        <authorList>
            <person name="Justa-Schuch D."/>
            <person name="Moller U."/>
            <person name="Geiss-Friedlander R."/>
        </authorList>
    </citation>
    <scope>SUBCELLULAR LOCATION (ISOFORM 2)</scope>
    <scope>NUCLEAR LOCALIZATION SIGNAL (ISOFORM 2)</scope>
</reference>
<reference key="15">
    <citation type="journal article" date="2017" name="Nat. Chem. Biol.">
        <title>DPP8 and DPP9 inhibition induces pro-caspase-1-dependent monocyte and macrophage pyroptosis.</title>
        <authorList>
            <person name="Okondo M.C."/>
            <person name="Johnson D.C."/>
            <person name="Sridharan R."/>
            <person name="Go E.B."/>
            <person name="Chui A.J."/>
            <person name="Wang M.S."/>
            <person name="Poplawski S.E."/>
            <person name="Wu W."/>
            <person name="Liu Y."/>
            <person name="Lai J.H."/>
            <person name="Sanford D.G."/>
            <person name="Arciprete M.O."/>
            <person name="Golub T.R."/>
            <person name="Bachovchin W.W."/>
            <person name="Bachovchin D.A."/>
        </authorList>
    </citation>
    <scope>FUNCTION</scope>
    <scope>ACTIVITY REGULATION</scope>
</reference>
<reference key="16">
    <citation type="journal article" date="2018" name="J. Biol. Chem.">
        <title>Human DPP9 represses NLRP1 inflammasome and protects against autoinflammatory diseases via both peptidase activity and FIIND domain binding.</title>
        <authorList>
            <person name="Zhong F.L."/>
            <person name="Robinson K."/>
            <person name="Teo D.E.T."/>
            <person name="Tan K.Y."/>
            <person name="Lim C."/>
            <person name="Harapas C.R."/>
            <person name="Yu C.H."/>
            <person name="Xie W.H."/>
            <person name="Sobota R.M."/>
            <person name="Au V.B."/>
            <person name="Hopkins R."/>
            <person name="D'Osualdo A."/>
            <person name="Reed J.C."/>
            <person name="Connolly J.E."/>
            <person name="Masters S.L."/>
            <person name="Reversade B."/>
        </authorList>
    </citation>
    <scope>FUNCTION</scope>
    <scope>CATALYTIC ACTIVITY</scope>
    <scope>ACTIVE SITE</scope>
    <scope>MUTAGENESIS OF SER-730</scope>
</reference>
<reference key="17">
    <citation type="journal article" date="2018" name="Nat. Med.">
        <title>DPP8/DPP9 inhibitor-induced pyroptosis for treatment of acute myeloid leukemia.</title>
        <authorList>
            <person name="Johnson D.C."/>
            <person name="Taabazuing C.Y."/>
            <person name="Okondo M.C."/>
            <person name="Chui A.J."/>
            <person name="Rao S.D."/>
            <person name="Brown F.C."/>
            <person name="Reed C."/>
            <person name="Peguero E."/>
            <person name="de Stanchina E."/>
            <person name="Kentsis A."/>
            <person name="Bachovchin D.A."/>
        </authorList>
    </citation>
    <scope>FUNCTION</scope>
    <scope>ACTIVITY REGULATION</scope>
</reference>
<reference key="18">
    <citation type="journal article" date="2019" name="ACS Chem. Biol.">
        <title>DPP9's enzymatic activity and not its binding to CARD8 inhibits inflammasome activation.</title>
        <authorList>
            <person name="Griswold A.R."/>
            <person name="Ball D.P."/>
            <person name="Bhattacharjee A."/>
            <person name="Chui A.J."/>
            <person name="Rao S.D."/>
            <person name="Taabazuing C.Y."/>
            <person name="Bachovchin D.A."/>
        </authorList>
    </citation>
    <scope>FUNCTION</scope>
</reference>
<reference key="19">
    <citation type="journal article" date="2020" name="Cell Death Dis.">
        <title>DPP8/9 inhibitors activate the CARD8 inflammasome in resting lymphocytes.</title>
        <authorList>
            <person name="Johnson D.C."/>
            <person name="Okondo M.C."/>
            <person name="Orth E.L."/>
            <person name="Rao S.D."/>
            <person name="Huang H.C."/>
            <person name="Ball D.P."/>
            <person name="Bachovchin D.A."/>
        </authorList>
    </citation>
    <scope>FUNCTION</scope>
    <scope>ACTIVITY REGULATION</scope>
</reference>
<reference key="20">
    <citation type="journal article" date="2021" name="Nature">
        <title>Structural and biochemical mechanisms of NLRP1 inhibition by DPP9.</title>
        <authorList>
            <person name="Huang M."/>
            <person name="Zhang X."/>
            <person name="Toh G.A."/>
            <person name="Gong Q."/>
            <person name="Wang J."/>
            <person name="Han Z."/>
            <person name="Wu B."/>
            <person name="Zhong F."/>
            <person name="Chai J."/>
        </authorList>
    </citation>
    <scope>FUNCTION</scope>
    <scope>INTERACTION WITH NLRP1 AND CARD8</scope>
    <scope>CATALYTIC ACTIVITY</scope>
    <scope>MUTAGENESIS OF LEU-102 AND SER-730</scope>
</reference>
<reference key="21">
    <citation type="journal article" date="2022" name="Nat. Chem. Biol.">
        <title>Chemical inhibition of DPP9 sensitizes the CARD8 inflammasome in HIV-1-infected cells.</title>
        <authorList>
            <person name="Clark K.M."/>
            <person name="Kim J.G."/>
            <person name="Wang Q."/>
            <person name="Gao H."/>
            <person name="Presti R.M."/>
            <person name="Shan L."/>
        </authorList>
    </citation>
    <scope>FUNCTION</scope>
    <scope>ACTIVITY REGULATION</scope>
</reference>
<reference key="22">
    <citation type="journal article" date="2022" name="Sci. Immunol.">
        <title>DPP9 deficiency: An inflammasomopathy that can be rescued by lowering NLRP1/IL-1 signaling.</title>
        <authorList>
            <person name="Harapas C.R."/>
            <person name="Robinson K.S."/>
            <person name="Lay K."/>
            <person name="Wong J."/>
            <person name="Moreno Traspas R."/>
            <person name="Nabavizadeh N."/>
            <person name="Rass-Rothschild A."/>
            <person name="Boisson B."/>
            <person name="Drutman S.B."/>
            <person name="Laohamonthonkul P."/>
            <person name="Bonner D."/>
            <person name="Xiong J.R."/>
            <person name="Gorrell M.D."/>
            <person name="Davidson S."/>
            <person name="Yu C.H."/>
            <person name="Fleming M.D."/>
            <person name="Gudera J."/>
            <person name="Stein J."/>
            <person name="Ben-Harosh M."/>
            <person name="Groopman E."/>
            <person name="Shimamura A."/>
            <person name="Tamary H."/>
            <person name="Kayserili H."/>
            <person name="Hatipoglu N."/>
            <person name="Casanova J.L."/>
            <person name="Bernstein J.A."/>
            <person name="Zhong F.L."/>
            <person name="Masters S.L."/>
            <person name="Reversade B."/>
        </authorList>
    </citation>
    <scope>INVOLVEMENT IN HATIS</scope>
    <scope>VARIANTS HATIS 82-ARG--LEU-863 DEL; SER-138; 185-SER--LEU-863 DEL AND 822-GLN--LEU-863 DEL</scope>
    <scope>CHARACTERIZATION OF VARIANT HATIS SER-138 AND 822-GLN--LEU-863 DEL</scope>
    <scope>FUNCTION</scope>
</reference>
<reference evidence="28 29" key="23">
    <citation type="journal article" date="2018" name="Proc. Natl. Acad. Sci. U.S.A.">
        <title>Structures and mechanism of dipeptidyl peptidases 8 and 9, important players in cellular homeostasis and cancer.</title>
        <authorList>
            <person name="Ross B."/>
            <person name="Krapp S."/>
            <person name="Augustin M."/>
            <person name="Kierfersauer R."/>
            <person name="Arciniega M."/>
            <person name="Geiss-Friedlander R."/>
            <person name="Huber R."/>
        </authorList>
    </citation>
    <scope>X-RAY CRYSTALLOGRAPHY (2.90 ANGSTROMS)</scope>
    <scope>FUNCTION</scope>
    <scope>CATALYTIC ACTIVITY</scope>
    <scope>SUBUNIT</scope>
</reference>
<reference evidence="32 33" key="24">
    <citation type="journal article" date="2021" name="Immunity">
        <title>Dipeptidyl peptidase 9 sets a threshold for CARD8 inflammasome formation by sequestering its active C-terminal fragment.</title>
        <authorList>
            <person name="Sharif H."/>
            <person name="Hollingsworth L.R."/>
            <person name="Griswold A.R."/>
            <person name="Hsiao J.C."/>
            <person name="Wang Q."/>
            <person name="Bachovchin D.A."/>
            <person name="Wu H."/>
        </authorList>
    </citation>
    <scope>STRUCTURE BY ELECTRON MICROSCOPY (3.30 ANGSTROMS) IN COMPLEX WITH CARD8 AND VAL-BOROPRO</scope>
    <scope>FUNCTION</scope>
    <scope>ACTIVITY REGULATION</scope>
    <scope>INTERACTION WITH CARD8</scope>
    <scope>MUTAGENESIS OF 96-ARG-LYS-97; 100-LEU-LEU-101 AND 102-LEU-LEU-103</scope>
</reference>
<reference evidence="30 31" key="25">
    <citation type="journal article" date="2021" name="Nature">
        <title>DPP9 sequesters the C terminus of NLRP1 to repress inflammasome activation.</title>
        <authorList>
            <person name="Hollingsworth L.R."/>
            <person name="Sharif H."/>
            <person name="Griswold A.R."/>
            <person name="Fontana P."/>
            <person name="Mintseris J."/>
            <person name="Dagbay K.B."/>
            <person name="Paulo J.A."/>
            <person name="Gygi S.P."/>
            <person name="Bachovchin D.A."/>
            <person name="Wu H."/>
        </authorList>
    </citation>
    <scope>STRUCTURE BY ELECTRON MICROSCOPY (2.90 ANGSTROMS) IN COMPLEX WITH NLRP1 AND VAL-BOROPRO</scope>
    <scope>FUNCTION</scope>
    <scope>ACTIVITY REGULATION</scope>
    <scope>INTERACTION WITH NLRP1</scope>
    <scope>MUTAGENESIS OF 100-LEU-LEU-101 AND GLU-597</scope>
</reference>
<keyword id="KW-0002">3D-structure</keyword>
<keyword id="KW-0007">Acetylation</keyword>
<keyword id="KW-0025">Alternative splicing</keyword>
<keyword id="KW-0031">Aminopeptidase</keyword>
<keyword id="KW-0963">Cytoplasm</keyword>
<keyword id="KW-0225">Disease variant</keyword>
<keyword id="KW-0378">Hydrolase</keyword>
<keyword id="KW-0539">Nucleus</keyword>
<keyword id="KW-0645">Protease</keyword>
<keyword id="KW-1267">Proteomics identification</keyword>
<keyword id="KW-1185">Reference proteome</keyword>
<keyword id="KW-0720">Serine protease</keyword>
<dbReference type="EC" id="3.4.14.5" evidence="4 6 7 10 12 15"/>
<dbReference type="EMBL" id="AF452102">
    <property type="protein sequence ID" value="AAL47179.1"/>
    <property type="status" value="ALT_INIT"/>
    <property type="molecule type" value="mRNA"/>
</dbReference>
<dbReference type="EMBL" id="AY172660">
    <property type="protein sequence ID" value="AAO17262.1"/>
    <property type="molecule type" value="mRNA"/>
</dbReference>
<dbReference type="EMBL" id="AF542510">
    <property type="protein sequence ID" value="AAO73880.2"/>
    <property type="status" value="ALT_INIT"/>
    <property type="molecule type" value="mRNA"/>
</dbReference>
<dbReference type="EMBL" id="AY374518">
    <property type="protein sequence ID" value="AAQ83119.1"/>
    <property type="molecule type" value="mRNA"/>
</dbReference>
<dbReference type="EMBL" id="DQ417928">
    <property type="protein sequence ID" value="ABD83624.1"/>
    <property type="molecule type" value="mRNA"/>
</dbReference>
<dbReference type="EMBL" id="AK054656">
    <property type="protein sequence ID" value="BAB70784.1"/>
    <property type="status" value="ALT_INIT"/>
    <property type="molecule type" value="mRNA"/>
</dbReference>
<dbReference type="EMBL" id="AK075030">
    <property type="protein sequence ID" value="BAC11362.1"/>
    <property type="status" value="ALT_INIT"/>
    <property type="molecule type" value="mRNA"/>
</dbReference>
<dbReference type="EMBL" id="AK122654">
    <property type="protein sequence ID" value="BAG53644.1"/>
    <property type="molecule type" value="mRNA"/>
</dbReference>
<dbReference type="EMBL" id="AK131100">
    <property type="protein sequence ID" value="BAC85150.1"/>
    <property type="status" value="ALT_SEQ"/>
    <property type="molecule type" value="mRNA"/>
</dbReference>
<dbReference type="EMBL" id="AK131499">
    <property type="protein sequence ID" value="BAD18643.1"/>
    <property type="status" value="ALT_SEQ"/>
    <property type="molecule type" value="mRNA"/>
</dbReference>
<dbReference type="EMBL" id="AC005594">
    <property type="protein sequence ID" value="AAC33801.1"/>
    <property type="status" value="ALT_SEQ"/>
    <property type="molecule type" value="Genomic_DNA"/>
</dbReference>
<dbReference type="EMBL" id="AC005783">
    <property type="protein sequence ID" value="AAC62840.1"/>
    <property type="status" value="ALT_SEQ"/>
    <property type="molecule type" value="Genomic_DNA"/>
</dbReference>
<dbReference type="EMBL" id="CH471139">
    <property type="protein sequence ID" value="EAW69199.1"/>
    <property type="molecule type" value="Genomic_DNA"/>
</dbReference>
<dbReference type="EMBL" id="CH471139">
    <property type="protein sequence ID" value="EAW69201.1"/>
    <property type="molecule type" value="Genomic_DNA"/>
</dbReference>
<dbReference type="EMBL" id="BC000970">
    <property type="protein sequence ID" value="AAH00970.1"/>
    <property type="molecule type" value="mRNA"/>
</dbReference>
<dbReference type="EMBL" id="BC037948">
    <property type="protein sequence ID" value="AAH37948.1"/>
    <property type="status" value="ALT_INIT"/>
    <property type="molecule type" value="mRNA"/>
</dbReference>
<dbReference type="EMBL" id="AL834376">
    <property type="protein sequence ID" value="CAD39039.3"/>
    <property type="status" value="ALT_FRAME"/>
    <property type="molecule type" value="mRNA"/>
</dbReference>
<dbReference type="EMBL" id="CR627380">
    <property type="protein sequence ID" value="CAH10477.1"/>
    <property type="molecule type" value="mRNA"/>
</dbReference>
<dbReference type="CCDS" id="CCDS45928.1">
    <molecule id="Q86TI2-2"/>
</dbReference>
<dbReference type="CCDS" id="CCDS92491.1">
    <molecule id="Q86TI2-1"/>
</dbReference>
<dbReference type="RefSeq" id="NP_001371540.1">
    <molecule id="Q86TI2-2"/>
    <property type="nucleotide sequence ID" value="NM_001384611.1"/>
</dbReference>
<dbReference type="RefSeq" id="NP_001371541.1">
    <molecule id="Q86TI2-2"/>
    <property type="nucleotide sequence ID" value="NM_001384612.1"/>
</dbReference>
<dbReference type="RefSeq" id="NP_001371542.1">
    <molecule id="Q86TI2-2"/>
    <property type="nucleotide sequence ID" value="NM_001384613.1"/>
</dbReference>
<dbReference type="RefSeq" id="NP_001371543.1">
    <molecule id="Q86TI2-2"/>
    <property type="nucleotide sequence ID" value="NM_001384614.1"/>
</dbReference>
<dbReference type="RefSeq" id="NP_001371544.1">
    <molecule id="Q86TI2-2"/>
    <property type="nucleotide sequence ID" value="NM_001384615.1"/>
</dbReference>
<dbReference type="RefSeq" id="NP_001371552.1">
    <molecule id="Q86TI2-1"/>
    <property type="nucleotide sequence ID" value="NM_001384623.1"/>
</dbReference>
<dbReference type="RefSeq" id="NP_001371553.1">
    <molecule id="Q86TI2-1"/>
    <property type="nucleotide sequence ID" value="NM_001384624.1"/>
</dbReference>
<dbReference type="RefSeq" id="NP_001371554.1">
    <molecule id="Q86TI2-1"/>
    <property type="nucleotide sequence ID" value="NM_001384625.1"/>
</dbReference>
<dbReference type="RefSeq" id="NP_001371555.1">
    <molecule id="Q86TI2-1"/>
    <property type="nucleotide sequence ID" value="NM_001384626.1"/>
</dbReference>
<dbReference type="RefSeq" id="NP_001371556.1">
    <molecule id="Q86TI2-1"/>
    <property type="nucleotide sequence ID" value="NM_001384627.1"/>
</dbReference>
<dbReference type="RefSeq" id="NP_631898.3">
    <molecule id="Q86TI2-2"/>
    <property type="nucleotide sequence ID" value="NM_139159.4"/>
</dbReference>
<dbReference type="RefSeq" id="XP_005259730.1">
    <property type="nucleotide sequence ID" value="XM_005259673.2"/>
</dbReference>
<dbReference type="RefSeq" id="XP_011526710.1">
    <property type="nucleotide sequence ID" value="XM_011528408.1"/>
</dbReference>
<dbReference type="RefSeq" id="XP_011526712.1">
    <property type="nucleotide sequence ID" value="XM_011528410.1"/>
</dbReference>
<dbReference type="RefSeq" id="XP_047295609.1">
    <molecule id="Q86TI2-1"/>
    <property type="nucleotide sequence ID" value="XM_047439653.1"/>
</dbReference>
<dbReference type="PDB" id="6EOQ">
    <property type="method" value="X-ray"/>
    <property type="resolution" value="3.00 A"/>
    <property type="chains" value="A/B/C/D=1-863"/>
</dbReference>
<dbReference type="PDB" id="6EOR">
    <property type="method" value="X-ray"/>
    <property type="resolution" value="2.90 A"/>
    <property type="chains" value="A/B/C/D=1-863"/>
</dbReference>
<dbReference type="PDB" id="6QZV">
    <property type="method" value="X-ray"/>
    <property type="resolution" value="3.00 A"/>
    <property type="chains" value="A/B/C/D=1-863"/>
</dbReference>
<dbReference type="PDB" id="6X6A">
    <property type="method" value="EM"/>
    <property type="resolution" value="3.60 A"/>
    <property type="chains" value="A/D=1-863"/>
</dbReference>
<dbReference type="PDB" id="6X6C">
    <property type="method" value="EM"/>
    <property type="resolution" value="2.90 A"/>
    <property type="chains" value="A/D=1-863"/>
</dbReference>
<dbReference type="PDB" id="7A3F">
    <property type="method" value="X-ray"/>
    <property type="resolution" value="2.90 A"/>
    <property type="chains" value="A/B/C/D=1-863"/>
</dbReference>
<dbReference type="PDB" id="7JKQ">
    <property type="method" value="EM"/>
    <property type="resolution" value="3.30 A"/>
    <property type="chains" value="A/D=1-863"/>
</dbReference>
<dbReference type="PDB" id="7JN7">
    <property type="method" value="EM"/>
    <property type="resolution" value="3.30 A"/>
    <property type="chains" value="A/D=1-863"/>
</dbReference>
<dbReference type="PDB" id="7SVL">
    <property type="method" value="X-ray"/>
    <property type="resolution" value="2.46 A"/>
    <property type="chains" value="A/B/C/D=1-863"/>
</dbReference>
<dbReference type="PDB" id="7SVN">
    <property type="method" value="X-ray"/>
    <property type="resolution" value="2.78 A"/>
    <property type="chains" value="A/B/C/D=1-863"/>
</dbReference>
<dbReference type="PDB" id="7ZXS">
    <property type="method" value="X-ray"/>
    <property type="resolution" value="1.81 A"/>
    <property type="chains" value="A/B/C/D=20-863"/>
</dbReference>
<dbReference type="PDBsum" id="6EOQ"/>
<dbReference type="PDBsum" id="6EOR"/>
<dbReference type="PDBsum" id="6QZV"/>
<dbReference type="PDBsum" id="6X6A"/>
<dbReference type="PDBsum" id="6X6C"/>
<dbReference type="PDBsum" id="7A3F"/>
<dbReference type="PDBsum" id="7JKQ"/>
<dbReference type="PDBsum" id="7JN7"/>
<dbReference type="PDBsum" id="7SVL"/>
<dbReference type="PDBsum" id="7SVN"/>
<dbReference type="PDBsum" id="7ZXS"/>
<dbReference type="EMDB" id="EMD-22074"/>
<dbReference type="EMDB" id="EMD-22075"/>
<dbReference type="EMDB" id="EMD-22367"/>
<dbReference type="EMDB" id="EMD-22402"/>
<dbReference type="SASBDB" id="Q86TI2"/>
<dbReference type="SMR" id="Q86TI2"/>
<dbReference type="BioGRID" id="124789">
    <property type="interactions" value="133"/>
</dbReference>
<dbReference type="CORUM" id="Q86TI2"/>
<dbReference type="FunCoup" id="Q86TI2">
    <property type="interactions" value="1496"/>
</dbReference>
<dbReference type="IntAct" id="Q86TI2">
    <property type="interactions" value="84"/>
</dbReference>
<dbReference type="MINT" id="Q86TI2"/>
<dbReference type="STRING" id="9606.ENSP00000262960"/>
<dbReference type="BindingDB" id="Q86TI2"/>
<dbReference type="ChEMBL" id="CHEMBL4793"/>
<dbReference type="DrugBank" id="DB06182">
    <property type="generic name" value="Talabostat"/>
</dbReference>
<dbReference type="DrugCentral" id="Q86TI2"/>
<dbReference type="GuidetoPHARMACOLOGY" id="2357"/>
<dbReference type="ESTHER" id="human-DPP9">
    <property type="family name" value="DPP4N_Peptidase_S9"/>
</dbReference>
<dbReference type="MEROPS" id="S09.019"/>
<dbReference type="iPTMnet" id="Q86TI2"/>
<dbReference type="MetOSite" id="Q86TI2"/>
<dbReference type="PhosphoSitePlus" id="Q86TI2"/>
<dbReference type="SwissPalm" id="Q86TI2"/>
<dbReference type="BioMuta" id="DPP9"/>
<dbReference type="DMDM" id="67460390"/>
<dbReference type="jPOST" id="Q86TI2"/>
<dbReference type="MassIVE" id="Q86TI2"/>
<dbReference type="PaxDb" id="9606-ENSP00000262960"/>
<dbReference type="PeptideAtlas" id="Q86TI2"/>
<dbReference type="ProteomicsDB" id="69697">
    <molecule id="Q86TI2-1"/>
</dbReference>
<dbReference type="ProteomicsDB" id="69698">
    <molecule id="Q86TI2-2"/>
</dbReference>
<dbReference type="ProteomicsDB" id="69700">
    <molecule id="Q86TI2-4"/>
</dbReference>
<dbReference type="Pumba" id="Q86TI2"/>
<dbReference type="Antibodypedia" id="23705">
    <property type="antibodies" value="405 antibodies from 28 providers"/>
</dbReference>
<dbReference type="DNASU" id="91039"/>
<dbReference type="Ensembl" id="ENST00000262960.14">
    <molecule id="Q86TI2-2"/>
    <property type="protein sequence ID" value="ENSP00000262960.8"/>
    <property type="gene ID" value="ENSG00000142002.19"/>
</dbReference>
<dbReference type="Ensembl" id="ENST00000593973.2">
    <molecule id="Q86TI2-1"/>
    <property type="protein sequence ID" value="ENSP00000515514.1"/>
    <property type="gene ID" value="ENSG00000142002.19"/>
</dbReference>
<dbReference type="Ensembl" id="ENST00000594671.5">
    <molecule id="Q86TI2-4"/>
    <property type="protein sequence ID" value="ENSP00000472224.1"/>
    <property type="gene ID" value="ENSG00000142002.19"/>
</dbReference>
<dbReference type="Ensembl" id="ENST00000598800.5">
    <molecule id="Q86TI2-1"/>
    <property type="protein sequence ID" value="ENSP00000469603.1"/>
    <property type="gene ID" value="ENSG00000142002.19"/>
</dbReference>
<dbReference type="Ensembl" id="ENST00000600621.6">
    <molecule id="Q86TI2-2"/>
    <property type="protein sequence ID" value="ENSP00000472549.2"/>
    <property type="gene ID" value="ENSG00000142002.19"/>
</dbReference>
<dbReference type="Ensembl" id="ENST00000601130.6">
    <molecule id="Q86TI2-2"/>
    <property type="protein sequence ID" value="ENSP00000471629.2"/>
    <property type="gene ID" value="ENSG00000142002.19"/>
</dbReference>
<dbReference type="GeneID" id="91039"/>
<dbReference type="KEGG" id="hsa:91039"/>
<dbReference type="MANE-Select" id="ENST00000262960.14">
    <molecule id="Q86TI2-2"/>
    <property type="protein sequence ID" value="ENSP00000262960.8"/>
    <property type="RefSeq nucleotide sequence ID" value="NM_139159.5"/>
    <property type="RefSeq protein sequence ID" value="NP_631898.3"/>
</dbReference>
<dbReference type="UCSC" id="uc002mba.5">
    <molecule id="Q86TI2-1"/>
    <property type="organism name" value="human"/>
</dbReference>
<dbReference type="AGR" id="HGNC:18648"/>
<dbReference type="CTD" id="91039"/>
<dbReference type="DisGeNET" id="91039"/>
<dbReference type="GeneCards" id="DPP9"/>
<dbReference type="HGNC" id="HGNC:18648">
    <property type="gene designation" value="DPP9"/>
</dbReference>
<dbReference type="HPA" id="ENSG00000142002">
    <property type="expression patterns" value="Low tissue specificity"/>
</dbReference>
<dbReference type="MalaCards" id="DPP9"/>
<dbReference type="MIM" id="608258">
    <property type="type" value="gene"/>
</dbReference>
<dbReference type="MIM" id="620331">
    <property type="type" value="phenotype"/>
</dbReference>
<dbReference type="neXtProt" id="NX_Q86TI2"/>
<dbReference type="OpenTargets" id="ENSG00000142002"/>
<dbReference type="Orphanet" id="2032">
    <property type="disease" value="Idiopathic pulmonary fibrosis"/>
</dbReference>
<dbReference type="PharmGKB" id="PA38620"/>
<dbReference type="VEuPathDB" id="HostDB:ENSG00000142002"/>
<dbReference type="eggNOG" id="KOG2281">
    <property type="taxonomic scope" value="Eukaryota"/>
</dbReference>
<dbReference type="GeneTree" id="ENSGT00940000158174"/>
<dbReference type="HOGENOM" id="CLU_006105_1_0_1"/>
<dbReference type="InParanoid" id="Q86TI2"/>
<dbReference type="OMA" id="VTHMTPQ"/>
<dbReference type="OrthoDB" id="16520at2759"/>
<dbReference type="PAN-GO" id="Q86TI2">
    <property type="GO annotations" value="1 GO annotation based on evolutionary models"/>
</dbReference>
<dbReference type="PhylomeDB" id="Q86TI2"/>
<dbReference type="TreeFam" id="TF313309"/>
<dbReference type="BRENDA" id="3.4.13.19">
    <property type="organism ID" value="2681"/>
</dbReference>
<dbReference type="PathwayCommons" id="Q86TI2"/>
<dbReference type="SABIO-RK" id="Q86TI2"/>
<dbReference type="SignaLink" id="Q86TI2"/>
<dbReference type="BioGRID-ORCS" id="91039">
    <property type="hits" value="27 hits in 1157 CRISPR screens"/>
</dbReference>
<dbReference type="ChiTaRS" id="DPP9">
    <property type="organism name" value="human"/>
</dbReference>
<dbReference type="GeneWiki" id="DPP9"/>
<dbReference type="GenomeRNAi" id="91039"/>
<dbReference type="Pharos" id="Q86TI2">
    <property type="development level" value="Tchem"/>
</dbReference>
<dbReference type="PRO" id="PR:Q86TI2"/>
<dbReference type="Proteomes" id="UP000005640">
    <property type="component" value="Chromosome 19"/>
</dbReference>
<dbReference type="RNAct" id="Q86TI2">
    <property type="molecule type" value="protein"/>
</dbReference>
<dbReference type="Bgee" id="ENSG00000142002">
    <property type="expression patterns" value="Expressed in gastrocnemius and 164 other cell types or tissues"/>
</dbReference>
<dbReference type="ExpressionAtlas" id="Q86TI2">
    <property type="expression patterns" value="baseline and differential"/>
</dbReference>
<dbReference type="GO" id="GO:0031252">
    <property type="term" value="C:cell leading edge"/>
    <property type="evidence" value="ECO:0000314"/>
    <property type="project" value="CACAO"/>
</dbReference>
<dbReference type="GO" id="GO:0005829">
    <property type="term" value="C:cytosol"/>
    <property type="evidence" value="ECO:0000314"/>
    <property type="project" value="HPA"/>
</dbReference>
<dbReference type="GO" id="GO:0005874">
    <property type="term" value="C:microtubule"/>
    <property type="evidence" value="ECO:0000314"/>
    <property type="project" value="CACAO"/>
</dbReference>
<dbReference type="GO" id="GO:0005634">
    <property type="term" value="C:nucleus"/>
    <property type="evidence" value="ECO:0007669"/>
    <property type="project" value="UniProtKB-SubCell"/>
</dbReference>
<dbReference type="GO" id="GO:0004177">
    <property type="term" value="F:aminopeptidase activity"/>
    <property type="evidence" value="ECO:0007669"/>
    <property type="project" value="UniProtKB-KW"/>
</dbReference>
<dbReference type="GO" id="GO:0008239">
    <property type="term" value="F:dipeptidyl-peptidase activity"/>
    <property type="evidence" value="ECO:0000314"/>
    <property type="project" value="UniProtKB"/>
</dbReference>
<dbReference type="GO" id="GO:0042802">
    <property type="term" value="F:identical protein binding"/>
    <property type="evidence" value="ECO:0000353"/>
    <property type="project" value="IntAct"/>
</dbReference>
<dbReference type="GO" id="GO:0008236">
    <property type="term" value="F:serine-type peptidase activity"/>
    <property type="evidence" value="ECO:0007669"/>
    <property type="project" value="UniProtKB-KW"/>
</dbReference>
<dbReference type="GO" id="GO:0043069">
    <property type="term" value="P:negative regulation of programmed cell death"/>
    <property type="evidence" value="ECO:0000314"/>
    <property type="project" value="UniProt"/>
</dbReference>
<dbReference type="GO" id="GO:0006508">
    <property type="term" value="P:proteolysis"/>
    <property type="evidence" value="ECO:0000318"/>
    <property type="project" value="GO_Central"/>
</dbReference>
<dbReference type="GO" id="GO:0070269">
    <property type="term" value="P:pyroptotic inflammatory response"/>
    <property type="evidence" value="ECO:0000314"/>
    <property type="project" value="UniProtKB"/>
</dbReference>
<dbReference type="FunFam" id="2.140.10.30:FF:000002">
    <property type="entry name" value="Dipeptidyl peptidase 8-like isoform"/>
    <property type="match status" value="1"/>
</dbReference>
<dbReference type="FunFam" id="3.40.50.1820:FF:000016">
    <property type="entry name" value="Dipeptidyl peptidase 8-like isoform"/>
    <property type="match status" value="1"/>
</dbReference>
<dbReference type="Gene3D" id="3.40.50.1820">
    <property type="entry name" value="alpha/beta hydrolase"/>
    <property type="match status" value="1"/>
</dbReference>
<dbReference type="Gene3D" id="2.140.10.30">
    <property type="entry name" value="Dipeptidylpeptidase IV, N-terminal domain"/>
    <property type="match status" value="1"/>
</dbReference>
<dbReference type="InterPro" id="IPR029058">
    <property type="entry name" value="AB_hydrolase_fold"/>
</dbReference>
<dbReference type="InterPro" id="IPR045785">
    <property type="entry name" value="Dpp_8/9_N"/>
</dbReference>
<dbReference type="InterPro" id="IPR001375">
    <property type="entry name" value="Peptidase_S9_cat"/>
</dbReference>
<dbReference type="InterPro" id="IPR002469">
    <property type="entry name" value="Peptidase_S9B_N"/>
</dbReference>
<dbReference type="InterPro" id="IPR050278">
    <property type="entry name" value="Serine_Prot_S9B/DPPIV"/>
</dbReference>
<dbReference type="PANTHER" id="PTHR11731:SF109">
    <property type="entry name" value="DIPEPTIDYL PEPTIDASE 9"/>
    <property type="match status" value="1"/>
</dbReference>
<dbReference type="PANTHER" id="PTHR11731">
    <property type="entry name" value="PROTEASE FAMILY S9B,C DIPEPTIDYL-PEPTIDASE IV-RELATED"/>
    <property type="match status" value="1"/>
</dbReference>
<dbReference type="Pfam" id="PF19520">
    <property type="entry name" value="Dpp_8_9_N"/>
    <property type="match status" value="1"/>
</dbReference>
<dbReference type="Pfam" id="PF00930">
    <property type="entry name" value="DPPIV_N"/>
    <property type="match status" value="1"/>
</dbReference>
<dbReference type="Pfam" id="PF00326">
    <property type="entry name" value="Peptidase_S9"/>
    <property type="match status" value="1"/>
</dbReference>
<dbReference type="SUPFAM" id="SSF53474">
    <property type="entry name" value="alpha/beta-Hydrolases"/>
    <property type="match status" value="1"/>
</dbReference>
<dbReference type="SUPFAM" id="SSF82171">
    <property type="entry name" value="DPP6 N-terminal domain-like"/>
    <property type="match status" value="1"/>
</dbReference>
<proteinExistence type="evidence at protein level"/>